<gene>
    <name evidence="1" type="primary">rppH</name>
    <name evidence="1" type="synonym">nudH</name>
    <name type="ordered locus">HDEF_0654</name>
</gene>
<comment type="function">
    <text evidence="1">Accelerates the degradation of transcripts by removing pyrophosphate from the 5'-end of triphosphorylated RNA, leading to a more labile monophosphorylated state that can stimulate subsequent ribonuclease cleavage.</text>
</comment>
<comment type="cofactor">
    <cofactor evidence="1">
        <name>a divalent metal cation</name>
        <dbReference type="ChEBI" id="CHEBI:60240"/>
    </cofactor>
</comment>
<comment type="similarity">
    <text evidence="1">Belongs to the Nudix hydrolase family. RppH subfamily.</text>
</comment>
<sequence length="163" mass="19576">MIDNDGYRLNVGIVICNKKGQVLWAKRYGQYSWQFPQGGIHLTESPEEAMYRELFEELGLNKKDVRILTSTHYWLRYKLPKHLVRWNTDPVCIGQKQRWFLLELTCDDSNINVECTKAPEFDGWCWVSFWYPVRQVVSFKRDVYRQVMKEFFSFVSLIQKHLI</sequence>
<evidence type="ECO:0000255" key="1">
    <source>
        <dbReference type="HAMAP-Rule" id="MF_00298"/>
    </source>
</evidence>
<dbReference type="EC" id="3.6.1.-" evidence="1"/>
<dbReference type="EMBL" id="CP001277">
    <property type="protein sequence ID" value="ACQ67395.1"/>
    <property type="molecule type" value="Genomic_DNA"/>
</dbReference>
<dbReference type="RefSeq" id="WP_015873216.1">
    <property type="nucleotide sequence ID" value="NC_012751.1"/>
</dbReference>
<dbReference type="SMR" id="C4K4A2"/>
<dbReference type="STRING" id="572265.HDEF_0654"/>
<dbReference type="GeneID" id="66260522"/>
<dbReference type="KEGG" id="hde:HDEF_0654"/>
<dbReference type="eggNOG" id="COG0494">
    <property type="taxonomic scope" value="Bacteria"/>
</dbReference>
<dbReference type="HOGENOM" id="CLU_087195_3_1_6"/>
<dbReference type="Proteomes" id="UP000002334">
    <property type="component" value="Chromosome"/>
</dbReference>
<dbReference type="GO" id="GO:0005737">
    <property type="term" value="C:cytoplasm"/>
    <property type="evidence" value="ECO:0007669"/>
    <property type="project" value="TreeGrafter"/>
</dbReference>
<dbReference type="GO" id="GO:0046872">
    <property type="term" value="F:metal ion binding"/>
    <property type="evidence" value="ECO:0007669"/>
    <property type="project" value="UniProtKB-KW"/>
</dbReference>
<dbReference type="GO" id="GO:0034353">
    <property type="term" value="F:mRNA 5'-diphosphatase activity"/>
    <property type="evidence" value="ECO:0007669"/>
    <property type="project" value="TreeGrafter"/>
</dbReference>
<dbReference type="GO" id="GO:0006402">
    <property type="term" value="P:mRNA catabolic process"/>
    <property type="evidence" value="ECO:0007669"/>
    <property type="project" value="TreeGrafter"/>
</dbReference>
<dbReference type="CDD" id="cd03671">
    <property type="entry name" value="NUDIX_Ap4A_hydrolase_plant_like"/>
    <property type="match status" value="1"/>
</dbReference>
<dbReference type="FunFam" id="3.90.79.10:FF:000001">
    <property type="entry name" value="RNA pyrophosphohydrolase"/>
    <property type="match status" value="1"/>
</dbReference>
<dbReference type="Gene3D" id="3.90.79.10">
    <property type="entry name" value="Nucleoside Triphosphate Pyrophosphohydrolase"/>
    <property type="match status" value="1"/>
</dbReference>
<dbReference type="HAMAP" id="MF_00298">
    <property type="entry name" value="Nudix_RppH"/>
    <property type="match status" value="1"/>
</dbReference>
<dbReference type="InterPro" id="IPR020476">
    <property type="entry name" value="Nudix_hydrolase"/>
</dbReference>
<dbReference type="InterPro" id="IPR015797">
    <property type="entry name" value="NUDIX_hydrolase-like_dom_sf"/>
</dbReference>
<dbReference type="InterPro" id="IPR020084">
    <property type="entry name" value="NUDIX_hydrolase_CS"/>
</dbReference>
<dbReference type="InterPro" id="IPR000086">
    <property type="entry name" value="NUDIX_hydrolase_dom"/>
</dbReference>
<dbReference type="InterPro" id="IPR022927">
    <property type="entry name" value="RppH"/>
</dbReference>
<dbReference type="NCBIfam" id="NF001934">
    <property type="entry name" value="PRK00714.1-1"/>
    <property type="match status" value="1"/>
</dbReference>
<dbReference type="NCBIfam" id="NF001937">
    <property type="entry name" value="PRK00714.1-4"/>
    <property type="match status" value="1"/>
</dbReference>
<dbReference type="NCBIfam" id="NF001938">
    <property type="entry name" value="PRK00714.1-5"/>
    <property type="match status" value="1"/>
</dbReference>
<dbReference type="PANTHER" id="PTHR23114">
    <property type="entry name" value="M7GPPPN-MRNA HYDROLASE"/>
    <property type="match status" value="1"/>
</dbReference>
<dbReference type="PANTHER" id="PTHR23114:SF17">
    <property type="entry name" value="M7GPPPN-MRNA HYDROLASE"/>
    <property type="match status" value="1"/>
</dbReference>
<dbReference type="Pfam" id="PF00293">
    <property type="entry name" value="NUDIX"/>
    <property type="match status" value="1"/>
</dbReference>
<dbReference type="PRINTS" id="PR00502">
    <property type="entry name" value="NUDIXFAMILY"/>
</dbReference>
<dbReference type="SUPFAM" id="SSF55811">
    <property type="entry name" value="Nudix"/>
    <property type="match status" value="1"/>
</dbReference>
<dbReference type="PROSITE" id="PS51462">
    <property type="entry name" value="NUDIX"/>
    <property type="match status" value="1"/>
</dbReference>
<dbReference type="PROSITE" id="PS00893">
    <property type="entry name" value="NUDIX_BOX"/>
    <property type="match status" value="1"/>
</dbReference>
<organism>
    <name type="scientific">Hamiltonella defensa subsp. Acyrthosiphon pisum (strain 5AT)</name>
    <dbReference type="NCBI Taxonomy" id="572265"/>
    <lineage>
        <taxon>Bacteria</taxon>
        <taxon>Pseudomonadati</taxon>
        <taxon>Pseudomonadota</taxon>
        <taxon>Gammaproteobacteria</taxon>
        <taxon>Enterobacterales</taxon>
        <taxon>Enterobacteriaceae</taxon>
        <taxon>aphid secondary symbionts</taxon>
        <taxon>Candidatus Hamiltonella</taxon>
    </lineage>
</organism>
<protein>
    <recommendedName>
        <fullName evidence="1">RNA pyrophosphohydrolase</fullName>
        <ecNumber evidence="1">3.6.1.-</ecNumber>
    </recommendedName>
    <alternativeName>
        <fullName evidence="1">(Di)nucleoside polyphosphate hydrolase</fullName>
    </alternativeName>
</protein>
<keyword id="KW-0378">Hydrolase</keyword>
<keyword id="KW-0479">Metal-binding</keyword>
<proteinExistence type="inferred from homology"/>
<name>RPPH_HAMD5</name>
<feature type="chain" id="PRO_1000204935" description="RNA pyrophosphohydrolase">
    <location>
        <begin position="1"/>
        <end position="163"/>
    </location>
</feature>
<feature type="domain" description="Nudix hydrolase" evidence="1">
    <location>
        <begin position="6"/>
        <end position="149"/>
    </location>
</feature>
<feature type="short sequence motif" description="Nudix box">
    <location>
        <begin position="38"/>
        <end position="59"/>
    </location>
</feature>
<accession>C4K4A2</accession>
<reference key="1">
    <citation type="journal article" date="2009" name="Proc. Natl. Acad. Sci. U.S.A.">
        <title>Hamiltonella defensa, genome evolution of protective bacterial endosymbiont from pathogenic ancestors.</title>
        <authorList>
            <person name="Degnan P.H."/>
            <person name="Yu Y."/>
            <person name="Sisneros N."/>
            <person name="Wing R.A."/>
            <person name="Moran N.A."/>
        </authorList>
    </citation>
    <scope>NUCLEOTIDE SEQUENCE [LARGE SCALE GENOMIC DNA]</scope>
    <source>
        <strain>5AT</strain>
    </source>
</reference>